<keyword id="KW-0637">Prenyltransferase</keyword>
<keyword id="KW-0808">Transferase</keyword>
<sequence length="369" mass="41225">MPSQSPYHALSRYFSFPNRDHQAWWTGKGPLLGNMLADAGYPEQQQYQYLTLFNLHLIPALGPSESHGAGIDGAEWKSLLSGSGKLEFSMTYRKSAVSLRIAFEPTSLLAGTKKDVFNKRRTQQLLGDLERLDIDIDTVLYHPLFDTLVVSDEEEAALQNAGTVIPDSSRTQQLLALNLIEGNVRADLYVYPYVKALATGTASSTLLWAAVKKIDRYNRFRDALSILKGYFETYPSSTTNPMFLSSDLAAPRNAFCRLFFSETNFSWERVQHLWTLGGTLSDKPTLKGLELAKILWDILGISTAPASPDSFPLLFTFELRPEQPYLRQKLGIPVSGLTESAIANACVAFFERLGWDDHAASYRTNLSAY</sequence>
<comment type="function">
    <text evidence="5 7 8">Prenyltransferase; part of the gene cluster that mediates the biosynthesis of malbrancheamide, a dichlorinated fungal indole alkaloid that belongs to a family of natural products containing a characteristic bicyclo[2.2.2]diazaoctane core (PubMed:23213353, PubMed:28777910, PubMed:31548667). The first step of malbrancheamide biosynthesis involves coupling of L-proline and L-tryptophan by malG, a bimodular NRPS, to produce L-Pro-L-Trp aldehyde through reductive offloading (PubMed:23213353, PubMed:31548667). This compound undergoes spontaneous cyclization and dehydration to give a dienamine which is reverse prenylated at C-2 by malE (PubMed:31548667). The other prenyltransferase present in the cluster, malB, displays modest activity, suggesting that may be a redundant gene in the pathway (PubMed:31548667). Subsequently, a [4+2] Diels-Alder cyclo-addition catalyzed by the bifunctional enzyme malC forms the characteristic bicyclo[2.2.2]diazaoctane ring of premalbrancheamid (PubMed:31548667). Finally, the flavin-dependent halogenase malA catalyzes the iterative dichlorination of the indole ring of premalbrancheamide to yield C-9 monochlorinated malbrancheamide B, C-8 monochlorinated isomalbrancheamide B, and dichlorinated malbrancheamide (PubMed:28777910, PubMed:31548667). MalA is also able to brominate premalbrancheamide at C-9 to yield malbrancheamide C, and, to a lesser extend, at C-8 to yield isomalbrancheamide C (PubMed:28777910). Finally, malA can brominate C-9 monochlorinated malbrancheamide B at C-8 to yield malbrancheamide D, or C-8 monochlorinated isomalbrancheamide B at C-9 to produce isomalbrancheamide D (PubMed:28777910).</text>
</comment>
<comment type="biotechnology">
    <text evidence="2 3 4 6">Malbrancheamides have the ability to inhibit calmodulin, calmodulin-dependent phosphodiesterase (PDE1), and induce both endothelium-independent and endothelium-dependent relaxant effects, suggesting their potential as vasorelaxant agents.</text>
</comment>
<comment type="similarity">
    <text evidence="10">Belongs to the tryptophan dimethylallyltransferase family.</text>
</comment>
<proteinExistence type="evidence at protein level"/>
<reference key="1">
    <citation type="journal article" date="2012" name="Med. Chem. Commun.">
        <title>Comparative analysis of the biosynthetic systems for fungal bicyclo[2.2.2]diazaoctane indole alkaloids: the (+)/(-)-notoamide, paraherquamide and malbrancheamide pathways.</title>
        <authorList>
            <person name="Li S."/>
            <person name="Anand K."/>
            <person name="Tran H."/>
            <person name="Yu F."/>
            <person name="Finefield J.M."/>
            <person name="Sunderhaus J.D."/>
            <person name="McAfoos T.J."/>
            <person name="Tsukamoto S."/>
            <person name="Williams R.M."/>
            <person name="Sherman D.H."/>
        </authorList>
    </citation>
    <scope>NUCLEOTIDE SEQUENCE [GENOMIC DNA]</scope>
    <scope>FUNCTION</scope>
    <source>
        <strain>RRC1813</strain>
    </source>
</reference>
<reference key="2">
    <citation type="journal article" date="2008" name="Bioorg. Med. Chem. Lett.">
        <title>Calmodulin inhibitory activity of the malbrancheamides and various analogs.</title>
        <authorList>
            <person name="Miller K.A."/>
            <person name="Figueroa M."/>
            <person name="Valente M.W."/>
            <person name="Greshock T.J."/>
            <person name="Mata R."/>
            <person name="Williams R.M."/>
        </authorList>
    </citation>
    <scope>BIOTECHNOLOGY</scope>
</reference>
<reference key="3">
    <citation type="journal article" date="2009" name="Anal. Biochem.">
        <title>An alternative assay to discover potential calmodulin inhibitors using a human fluorophore-labeled CaM protein.</title>
        <authorList>
            <person name="Gonzalez-Andrade M."/>
            <person name="Figueroa M."/>
            <person name="Rodriguez-Sotres R."/>
            <person name="Mata R."/>
            <person name="Sosa-Peinado A."/>
        </authorList>
    </citation>
    <scope>BIOTECHNOLOGY</scope>
</reference>
<reference key="4">
    <citation type="journal article" date="2011" name="J. Enzym. Inhib. Med. Chem.">
        <title>Fluorescence, circular dichroism, NMR, and docking studies of the interaction of the alkaloid malbrancheamide with calmodulin.</title>
        <authorList>
            <person name="Figueroa M."/>
            <person name="Gonzalez-Andrade M."/>
            <person name="Sosa-Peinado A."/>
            <person name="Madariaga-Mazon A."/>
            <person name="Del Rio-Portilla F."/>
            <person name="Gonzalez M.C."/>
            <person name="Mata R."/>
        </authorList>
    </citation>
    <scope>BIOTECHNOLOGY</scope>
</reference>
<reference key="5">
    <citation type="journal article" date="2015" name="J. Pharm. Pharmacol.">
        <title>Insights on the vasorelaxant mode of action of malbrancheamide.</title>
        <authorList>
            <person name="Madariaga-Mazon A."/>
            <person name="Hernandez-Abreu O."/>
            <person name="Estrada-Soto S."/>
            <person name="Mata R."/>
        </authorList>
    </citation>
    <scope>BIOTECHNOLOGY</scope>
</reference>
<reference key="6">
    <citation type="journal article" date="2017" name="J. Am. Chem. Soc.">
        <title>Function and structure of MalA/MalA', iterative halogenases for late-stage C-H functionalization of indole alkaloids.</title>
        <authorList>
            <person name="Fraley A.E."/>
            <person name="Garcia-Borras M."/>
            <person name="Tripathi A."/>
            <person name="Khare D."/>
            <person name="Mercado-Marin E.V."/>
            <person name="Tran H."/>
            <person name="Dan Q."/>
            <person name="Webb G.P."/>
            <person name="Watts K.R."/>
            <person name="Crews P."/>
            <person name="Sarpong R."/>
            <person name="Williams R.M."/>
            <person name="Smith J.L."/>
            <person name="Houk K.N."/>
            <person name="Sherman D.H."/>
        </authorList>
    </citation>
    <scope>FUNCTION</scope>
</reference>
<reference key="7">
    <citation type="journal article" date="2019" name="Nat. Chem.">
        <title>Fungal indole alkaloid biogenesis through evolution of a bifunctional reductase/Diels-Alderase.</title>
        <authorList>
            <person name="Dan Q."/>
            <person name="Newmister S.A."/>
            <person name="Klas K.R."/>
            <person name="Fraley A.E."/>
            <person name="McAfoos T.J."/>
            <person name="Somoza A.D."/>
            <person name="Sunderhaus J.D."/>
            <person name="Ye Y."/>
            <person name="Shende V.V."/>
            <person name="Yu F."/>
            <person name="Sanders J.N."/>
            <person name="Brown W.C."/>
            <person name="Zhao L."/>
            <person name="Paton R.S."/>
            <person name="Houk K.N."/>
            <person name="Smith J.L."/>
            <person name="Sherman D.H."/>
            <person name="Williams R.M."/>
        </authorList>
    </citation>
    <scope>FUNCTION</scope>
    <scope>CATALYTIC ACTIVITY</scope>
</reference>
<name>MALB_MALAU</name>
<feature type="chain" id="PRO_0000448774" description="Prenyltransferase malB">
    <location>
        <begin position="1"/>
        <end position="369"/>
    </location>
</feature>
<feature type="binding site" evidence="1">
    <location>
        <position position="87"/>
    </location>
    <ligand>
        <name>substrate</name>
    </ligand>
</feature>
<feature type="binding site" evidence="1">
    <location>
        <position position="100"/>
    </location>
    <ligand>
        <name>dimethylallyl diphosphate</name>
        <dbReference type="ChEBI" id="CHEBI:57623"/>
    </ligand>
</feature>
<feature type="binding site" evidence="1">
    <location>
        <position position="189"/>
    </location>
    <ligand>
        <name>dimethylallyl diphosphate</name>
        <dbReference type="ChEBI" id="CHEBI:57623"/>
    </ligand>
</feature>
<feature type="binding site" evidence="1">
    <location>
        <position position="191"/>
    </location>
    <ligand>
        <name>substrate</name>
    </ligand>
</feature>
<protein>
    <recommendedName>
        <fullName evidence="9">Prenyltransferase malB</fullName>
        <ecNumber evidence="8">2.5.1.-</ecNumber>
    </recommendedName>
    <alternativeName>
        <fullName evidence="9">Malbrancheamide biosynthesis cluster protein B</fullName>
    </alternativeName>
</protein>
<organism>
    <name type="scientific">Malbranchea aurantiaca</name>
    <dbReference type="NCBI Taxonomy" id="78605"/>
    <lineage>
        <taxon>Eukaryota</taxon>
        <taxon>Fungi</taxon>
        <taxon>Dikarya</taxon>
        <taxon>Ascomycota</taxon>
        <taxon>Pezizomycotina</taxon>
        <taxon>Eurotiomycetes</taxon>
        <taxon>Eurotiomycetidae</taxon>
        <taxon>Onygenales</taxon>
        <taxon>Malbrancheaceae</taxon>
        <taxon>Malbranchea</taxon>
    </lineage>
</organism>
<evidence type="ECO:0000250" key="1">
    <source>
        <dbReference type="UniProtKB" id="Q4WAW7"/>
    </source>
</evidence>
<evidence type="ECO:0000269" key="2">
    <source>
    </source>
</evidence>
<evidence type="ECO:0000269" key="3">
    <source>
    </source>
</evidence>
<evidence type="ECO:0000269" key="4">
    <source>
    </source>
</evidence>
<evidence type="ECO:0000269" key="5">
    <source>
    </source>
</evidence>
<evidence type="ECO:0000269" key="6">
    <source>
    </source>
</evidence>
<evidence type="ECO:0000269" key="7">
    <source>
    </source>
</evidence>
<evidence type="ECO:0000269" key="8">
    <source>
    </source>
</evidence>
<evidence type="ECO:0000303" key="9">
    <source>
    </source>
</evidence>
<evidence type="ECO:0000305" key="10"/>
<accession>L0E2Y5</accession>
<gene>
    <name evidence="9" type="primary">malB</name>
</gene>
<dbReference type="EC" id="2.5.1.-" evidence="8"/>
<dbReference type="EMBL" id="JQ708193">
    <property type="protein sequence ID" value="AGA37262.1"/>
    <property type="molecule type" value="Genomic_DNA"/>
</dbReference>
<dbReference type="SMR" id="L0E2Y5"/>
<dbReference type="GO" id="GO:0004659">
    <property type="term" value="F:prenyltransferase activity"/>
    <property type="evidence" value="ECO:0007669"/>
    <property type="project" value="UniProtKB-KW"/>
</dbReference>
<dbReference type="GO" id="GO:0009820">
    <property type="term" value="P:alkaloid metabolic process"/>
    <property type="evidence" value="ECO:0007669"/>
    <property type="project" value="InterPro"/>
</dbReference>
<dbReference type="CDD" id="cd13929">
    <property type="entry name" value="PT-DMATS_CymD"/>
    <property type="match status" value="1"/>
</dbReference>
<dbReference type="InterPro" id="IPR017795">
    <property type="entry name" value="Aro_prenylTrfase_DMATS"/>
</dbReference>
<dbReference type="NCBIfam" id="TIGR03429">
    <property type="entry name" value="arom_pren_DMATS"/>
    <property type="match status" value="1"/>
</dbReference>
<dbReference type="PANTHER" id="PTHR40627">
    <property type="entry name" value="INDOLE PRENYLTRANSFERASE TDIB-RELATED"/>
    <property type="match status" value="1"/>
</dbReference>
<dbReference type="PANTHER" id="PTHR40627:SF3">
    <property type="entry name" value="PRENYLTRANSFERASE ASQH2-RELATED"/>
    <property type="match status" value="1"/>
</dbReference>
<dbReference type="Pfam" id="PF11991">
    <property type="entry name" value="Trp_DMAT"/>
    <property type="match status" value="1"/>
</dbReference>